<keyword id="KW-0215">Deoxyribonucleotide synthesis</keyword>
<keyword id="KW-0408">Iron</keyword>
<keyword id="KW-0479">Metal-binding</keyword>
<keyword id="KW-0560">Oxidoreductase</keyword>
<keyword id="KW-1185">Reference proteome</keyword>
<evidence type="ECO:0000250" key="1"/>
<evidence type="ECO:0000255" key="2">
    <source>
        <dbReference type="PROSITE-ProRule" id="PRU10014"/>
    </source>
</evidence>
<evidence type="ECO:0000305" key="3"/>
<reference key="1">
    <citation type="journal article" date="1998" name="Science">
        <title>Complete genome sequence of Treponema pallidum, the syphilis spirochete.</title>
        <authorList>
            <person name="Fraser C.M."/>
            <person name="Norris S.J."/>
            <person name="Weinstock G.M."/>
            <person name="White O."/>
            <person name="Sutton G.G."/>
            <person name="Dodson R.J."/>
            <person name="Gwinn M.L."/>
            <person name="Hickey E.K."/>
            <person name="Clayton R.A."/>
            <person name="Ketchum K.A."/>
            <person name="Sodergren E."/>
            <person name="Hardham J.M."/>
            <person name="McLeod M.P."/>
            <person name="Salzberg S.L."/>
            <person name="Peterson J.D."/>
            <person name="Khalak H.G."/>
            <person name="Richardson D.L."/>
            <person name="Howell J.K."/>
            <person name="Chidambaram M."/>
            <person name="Utterback T.R."/>
            <person name="McDonald L.A."/>
            <person name="Artiach P."/>
            <person name="Bowman C."/>
            <person name="Cotton M.D."/>
            <person name="Fujii C."/>
            <person name="Garland S.A."/>
            <person name="Hatch B."/>
            <person name="Horst K."/>
            <person name="Roberts K.M."/>
            <person name="Sandusky M."/>
            <person name="Weidman J.F."/>
            <person name="Smith H.O."/>
            <person name="Venter J.C."/>
        </authorList>
    </citation>
    <scope>NUCLEOTIDE SEQUENCE [LARGE SCALE GENOMIC DNA]</scope>
    <source>
        <strain>Nichols</strain>
    </source>
</reference>
<sequence>MMESSTILQRRALFNEAGDIELHKRRMVGGNTTNLNDFNNMKYPWVSKWYRQAMNNFWIPEEINMSSDVQDYRNLSAIEKTAYDKILSFLIFLDSIQTANLPNIGQYITANEINLCLTIQAFQEAVHSQSYSYMLDTICSPEERNDILYQWKDDEHLLARNKFIGNLYNEFQDDKSVLALLKVAIANYVLEGIYFYSGFMFFYNLGRNNKMPGSVQEIRYINRDENTHLWLFRSIIQELQKEEPQVFTARNVRLFRDMIREGCEQEIKWGDYVIGDQIPGLNRHMVADYIRYLGNLRCENLGFEPLYEGHRVEPESMSWVSQYSNANLIKTDFFEAKSTAYAKSSAMVDDL</sequence>
<dbReference type="EC" id="1.17.4.1"/>
<dbReference type="EMBL" id="AE000520">
    <property type="protein sequence ID" value="AAC65049.1"/>
    <property type="molecule type" value="Genomic_DNA"/>
</dbReference>
<dbReference type="PIR" id="G71372">
    <property type="entry name" value="G71372"/>
</dbReference>
<dbReference type="RefSeq" id="WP_010881502.1">
    <property type="nucleotide sequence ID" value="NC_021490.2"/>
</dbReference>
<dbReference type="SMR" id="O83092"/>
<dbReference type="IntAct" id="O83092">
    <property type="interactions" value="3"/>
</dbReference>
<dbReference type="STRING" id="243276.TP_0053"/>
<dbReference type="EnsemblBacteria" id="AAC65049">
    <property type="protein sequence ID" value="AAC65049"/>
    <property type="gene ID" value="TP_0053"/>
</dbReference>
<dbReference type="KEGG" id="tpa:TP_0053"/>
<dbReference type="KEGG" id="tpw:TPANIC_0053"/>
<dbReference type="eggNOG" id="COG0208">
    <property type="taxonomic scope" value="Bacteria"/>
</dbReference>
<dbReference type="HOGENOM" id="CLU_035339_1_0_12"/>
<dbReference type="OrthoDB" id="9766544at2"/>
<dbReference type="Proteomes" id="UP000000811">
    <property type="component" value="Chromosome"/>
</dbReference>
<dbReference type="GO" id="GO:0046872">
    <property type="term" value="F:metal ion binding"/>
    <property type="evidence" value="ECO:0007669"/>
    <property type="project" value="UniProtKB-KW"/>
</dbReference>
<dbReference type="GO" id="GO:0004748">
    <property type="term" value="F:ribonucleoside-diphosphate reductase activity, thioredoxin disulfide as acceptor"/>
    <property type="evidence" value="ECO:0007669"/>
    <property type="project" value="UniProtKB-EC"/>
</dbReference>
<dbReference type="GO" id="GO:0009263">
    <property type="term" value="P:deoxyribonucleotide biosynthetic process"/>
    <property type="evidence" value="ECO:0007669"/>
    <property type="project" value="UniProtKB-KW"/>
</dbReference>
<dbReference type="CDD" id="cd01049">
    <property type="entry name" value="RNRR2"/>
    <property type="match status" value="1"/>
</dbReference>
<dbReference type="Gene3D" id="1.10.620.20">
    <property type="entry name" value="Ribonucleotide Reductase, subunit A"/>
    <property type="match status" value="1"/>
</dbReference>
<dbReference type="InterPro" id="IPR009078">
    <property type="entry name" value="Ferritin-like_SF"/>
</dbReference>
<dbReference type="InterPro" id="IPR012348">
    <property type="entry name" value="RNR-like"/>
</dbReference>
<dbReference type="InterPro" id="IPR033909">
    <property type="entry name" value="RNR_small"/>
</dbReference>
<dbReference type="InterPro" id="IPR030475">
    <property type="entry name" value="RNR_small_AS"/>
</dbReference>
<dbReference type="InterPro" id="IPR000358">
    <property type="entry name" value="RNR_small_fam"/>
</dbReference>
<dbReference type="NCBIfam" id="NF007184">
    <property type="entry name" value="PRK09614.1-3"/>
    <property type="match status" value="1"/>
</dbReference>
<dbReference type="PANTHER" id="PTHR23409">
    <property type="entry name" value="RIBONUCLEOSIDE-DIPHOSPHATE REDUCTASE SMALL CHAIN"/>
    <property type="match status" value="1"/>
</dbReference>
<dbReference type="PANTHER" id="PTHR23409:SF18">
    <property type="entry name" value="RIBONUCLEOSIDE-DIPHOSPHATE REDUCTASE SUBUNIT M2"/>
    <property type="match status" value="1"/>
</dbReference>
<dbReference type="Pfam" id="PF00268">
    <property type="entry name" value="Ribonuc_red_sm"/>
    <property type="match status" value="1"/>
</dbReference>
<dbReference type="PIRSF" id="PIRSF000355">
    <property type="entry name" value="NrdB"/>
    <property type="match status" value="1"/>
</dbReference>
<dbReference type="SUPFAM" id="SSF47240">
    <property type="entry name" value="Ferritin-like"/>
    <property type="match status" value="1"/>
</dbReference>
<dbReference type="PROSITE" id="PS00368">
    <property type="entry name" value="RIBORED_SMALL"/>
    <property type="match status" value="1"/>
</dbReference>
<gene>
    <name type="primary">nrdB</name>
    <name type="ordered locus">TP_0053</name>
</gene>
<feature type="chain" id="PRO_0000190487" description="Ribonucleoside-diphosphate reductase subunit beta">
    <location>
        <begin position="1"/>
        <end position="351"/>
    </location>
</feature>
<feature type="active site" evidence="2">
    <location>
        <position position="131"/>
    </location>
</feature>
<feature type="binding site" evidence="2">
    <location>
        <position position="94"/>
    </location>
    <ligand>
        <name>Fe cation</name>
        <dbReference type="ChEBI" id="CHEBI:24875"/>
        <label>1</label>
    </ligand>
</feature>
<feature type="binding site" evidence="2">
    <location>
        <position position="124"/>
    </location>
    <ligand>
        <name>Fe cation</name>
        <dbReference type="ChEBI" id="CHEBI:24875"/>
        <label>1</label>
    </ligand>
</feature>
<feature type="binding site" evidence="1">
    <location>
        <position position="124"/>
    </location>
    <ligand>
        <name>Fe cation</name>
        <dbReference type="ChEBI" id="CHEBI:24875"/>
        <label>2</label>
    </ligand>
</feature>
<feature type="binding site" evidence="2">
    <location>
        <position position="127"/>
    </location>
    <ligand>
        <name>Fe cation</name>
        <dbReference type="ChEBI" id="CHEBI:24875"/>
        <label>1</label>
    </ligand>
</feature>
<feature type="binding site" evidence="1">
    <location>
        <position position="191"/>
    </location>
    <ligand>
        <name>Fe cation</name>
        <dbReference type="ChEBI" id="CHEBI:24875"/>
        <label>2</label>
    </ligand>
</feature>
<feature type="binding site" evidence="1">
    <location>
        <position position="225"/>
    </location>
    <ligand>
        <name>Fe cation</name>
        <dbReference type="ChEBI" id="CHEBI:24875"/>
        <label>2</label>
    </ligand>
</feature>
<feature type="binding site" evidence="1">
    <location>
        <position position="228"/>
    </location>
    <ligand>
        <name>Fe cation</name>
        <dbReference type="ChEBI" id="CHEBI:24875"/>
        <label>2</label>
    </ligand>
</feature>
<protein>
    <recommendedName>
        <fullName>Ribonucleoside-diphosphate reductase subunit beta</fullName>
        <ecNumber>1.17.4.1</ecNumber>
    </recommendedName>
    <alternativeName>
        <fullName>Ribonucleotide reductase small subunit</fullName>
    </alternativeName>
</protein>
<comment type="function">
    <text evidence="1">Provides the precursors necessary for DNA synthesis. Catalyzes the biosynthesis of deoxyribonucleotides from the corresponding ribonucleotides (By similarity).</text>
</comment>
<comment type="catalytic activity">
    <reaction evidence="2">
        <text>a 2'-deoxyribonucleoside 5'-diphosphate + [thioredoxin]-disulfide + H2O = a ribonucleoside 5'-diphosphate + [thioredoxin]-dithiol</text>
        <dbReference type="Rhea" id="RHEA:23252"/>
        <dbReference type="Rhea" id="RHEA-COMP:10698"/>
        <dbReference type="Rhea" id="RHEA-COMP:10700"/>
        <dbReference type="ChEBI" id="CHEBI:15377"/>
        <dbReference type="ChEBI" id="CHEBI:29950"/>
        <dbReference type="ChEBI" id="CHEBI:50058"/>
        <dbReference type="ChEBI" id="CHEBI:57930"/>
        <dbReference type="ChEBI" id="CHEBI:73316"/>
        <dbReference type="EC" id="1.17.4.1"/>
    </reaction>
</comment>
<comment type="cofactor">
    <cofactor evidence="1">
        <name>Fe cation</name>
        <dbReference type="ChEBI" id="CHEBI:24875"/>
    </cofactor>
    <text evidence="1">Binds 2 iron ions per subunit.</text>
</comment>
<comment type="subunit">
    <text evidence="1">Tetramer of two alpha and two beta subunits.</text>
</comment>
<comment type="similarity">
    <text evidence="3">Belongs to the ribonucleoside diphosphate reductase small chain family.</text>
</comment>
<name>RIR2_TREPA</name>
<proteinExistence type="inferred from homology"/>
<organism>
    <name type="scientific">Treponema pallidum (strain Nichols)</name>
    <dbReference type="NCBI Taxonomy" id="243276"/>
    <lineage>
        <taxon>Bacteria</taxon>
        <taxon>Pseudomonadati</taxon>
        <taxon>Spirochaetota</taxon>
        <taxon>Spirochaetia</taxon>
        <taxon>Spirochaetales</taxon>
        <taxon>Treponemataceae</taxon>
        <taxon>Treponema</taxon>
    </lineage>
</organism>
<accession>O83092</accession>